<gene>
    <name type="primary">cox-4</name>
    <name type="ORF">NCU05689</name>
</gene>
<organism>
    <name type="scientific">Neurospora crassa (strain ATCC 24698 / 74-OR23-1A / CBS 708.71 / DSM 1257 / FGSC 987)</name>
    <dbReference type="NCBI Taxonomy" id="367110"/>
    <lineage>
        <taxon>Eukaryota</taxon>
        <taxon>Fungi</taxon>
        <taxon>Dikarya</taxon>
        <taxon>Ascomycota</taxon>
        <taxon>Pezizomycotina</taxon>
        <taxon>Sordariomycetes</taxon>
        <taxon>Sordariomycetidae</taxon>
        <taxon>Sordariales</taxon>
        <taxon>Sordariaceae</taxon>
        <taxon>Neurospora</taxon>
    </lineage>
</organism>
<dbReference type="EMBL" id="CM002238">
    <property type="protein sequence ID" value="EAA33815.1"/>
    <property type="molecule type" value="Genomic_DNA"/>
</dbReference>
<dbReference type="EMBL" id="M12116">
    <property type="protein sequence ID" value="AAA33574.1"/>
    <property type="molecule type" value="Genomic_DNA"/>
</dbReference>
<dbReference type="PIR" id="A25629">
    <property type="entry name" value="A25629"/>
</dbReference>
<dbReference type="RefSeq" id="XP_963051.1">
    <property type="nucleotide sequence ID" value="XM_957958.3"/>
</dbReference>
<dbReference type="SMR" id="P06809"/>
<dbReference type="FunCoup" id="P06809">
    <property type="interactions" value="424"/>
</dbReference>
<dbReference type="STRING" id="367110.P06809"/>
<dbReference type="PaxDb" id="5141-EFNCRP00000007638"/>
<dbReference type="EnsemblFungi" id="EAA33815">
    <property type="protein sequence ID" value="EAA33815"/>
    <property type="gene ID" value="NCU05689"/>
</dbReference>
<dbReference type="GeneID" id="3879200"/>
<dbReference type="KEGG" id="ncr:NCU05689"/>
<dbReference type="VEuPathDB" id="FungiDB:NCU05689"/>
<dbReference type="HOGENOM" id="CLU_091071_0_0_1"/>
<dbReference type="InParanoid" id="P06809"/>
<dbReference type="OMA" id="DHKPYWM"/>
<dbReference type="OrthoDB" id="5388322at2759"/>
<dbReference type="UniPathway" id="UPA00705"/>
<dbReference type="Proteomes" id="UP000001805">
    <property type="component" value="Chromosome 3, Linkage Group III"/>
</dbReference>
<dbReference type="GO" id="GO:0005743">
    <property type="term" value="C:mitochondrial inner membrane"/>
    <property type="evidence" value="ECO:0007669"/>
    <property type="project" value="UniProtKB-SubCell"/>
</dbReference>
<dbReference type="GO" id="GO:0045277">
    <property type="term" value="C:respiratory chain complex IV"/>
    <property type="evidence" value="ECO:0007669"/>
    <property type="project" value="EnsemblFungi"/>
</dbReference>
<dbReference type="GO" id="GO:0004129">
    <property type="term" value="F:cytochrome-c oxidase activity"/>
    <property type="evidence" value="ECO:0007669"/>
    <property type="project" value="EnsemblFungi"/>
</dbReference>
<dbReference type="GO" id="GO:0008270">
    <property type="term" value="F:zinc ion binding"/>
    <property type="evidence" value="ECO:0007669"/>
    <property type="project" value="EnsemblFungi"/>
</dbReference>
<dbReference type="GO" id="GO:0033617">
    <property type="term" value="P:mitochondrial cytochrome c oxidase assembly"/>
    <property type="evidence" value="ECO:0007669"/>
    <property type="project" value="EnsemblFungi"/>
</dbReference>
<dbReference type="GO" id="GO:0006123">
    <property type="term" value="P:mitochondrial electron transport, cytochrome c to oxygen"/>
    <property type="evidence" value="ECO:0000318"/>
    <property type="project" value="GO_Central"/>
</dbReference>
<dbReference type="CDD" id="cd00924">
    <property type="entry name" value="Cyt_c_Oxidase_Vb"/>
    <property type="match status" value="1"/>
</dbReference>
<dbReference type="FunFam" id="2.60.11.10:FF:000003">
    <property type="entry name" value="Cytochrome c oxidase subunit IV"/>
    <property type="match status" value="1"/>
</dbReference>
<dbReference type="Gene3D" id="2.60.11.10">
    <property type="entry name" value="Cytochrome c oxidase, subunit Vb"/>
    <property type="match status" value="1"/>
</dbReference>
<dbReference type="InterPro" id="IPR002124">
    <property type="entry name" value="Cyt_c_oxidase_su5b"/>
</dbReference>
<dbReference type="InterPro" id="IPR036972">
    <property type="entry name" value="Cyt_c_oxidase_su5b_sf"/>
</dbReference>
<dbReference type="PANTHER" id="PTHR10122:SF0">
    <property type="entry name" value="CYTOCHROME C OXIDASE SUBUNIT 5B, ISOFORM A-RELATED"/>
    <property type="match status" value="1"/>
</dbReference>
<dbReference type="PANTHER" id="PTHR10122">
    <property type="entry name" value="CYTOCHROME C OXIDASE SUBUNIT 5B, MITOCHONDRIAL"/>
    <property type="match status" value="1"/>
</dbReference>
<dbReference type="Pfam" id="PF01215">
    <property type="entry name" value="COX5B"/>
    <property type="match status" value="1"/>
</dbReference>
<dbReference type="SUPFAM" id="SSF57802">
    <property type="entry name" value="Rubredoxin-like"/>
    <property type="match status" value="1"/>
</dbReference>
<dbReference type="PROSITE" id="PS51359">
    <property type="entry name" value="COX5B_2"/>
    <property type="match status" value="1"/>
</dbReference>
<reference key="1">
    <citation type="journal article" date="2003" name="Nature">
        <title>The genome sequence of the filamentous fungus Neurospora crassa.</title>
        <authorList>
            <person name="Galagan J.E."/>
            <person name="Calvo S.E."/>
            <person name="Borkovich K.A."/>
            <person name="Selker E.U."/>
            <person name="Read N.D."/>
            <person name="Jaffe D.B."/>
            <person name="FitzHugh W."/>
            <person name="Ma L.-J."/>
            <person name="Smirnov S."/>
            <person name="Purcell S."/>
            <person name="Rehman B."/>
            <person name="Elkins T."/>
            <person name="Engels R."/>
            <person name="Wang S."/>
            <person name="Nielsen C.B."/>
            <person name="Butler J."/>
            <person name="Endrizzi M."/>
            <person name="Qui D."/>
            <person name="Ianakiev P."/>
            <person name="Bell-Pedersen D."/>
            <person name="Nelson M.A."/>
            <person name="Werner-Washburne M."/>
            <person name="Selitrennikoff C.P."/>
            <person name="Kinsey J.A."/>
            <person name="Braun E.L."/>
            <person name="Zelter A."/>
            <person name="Schulte U."/>
            <person name="Kothe G.O."/>
            <person name="Jedd G."/>
            <person name="Mewes H.-W."/>
            <person name="Staben C."/>
            <person name="Marcotte E."/>
            <person name="Greenberg D."/>
            <person name="Roy A."/>
            <person name="Foley K."/>
            <person name="Naylor J."/>
            <person name="Stange-Thomann N."/>
            <person name="Barrett R."/>
            <person name="Gnerre S."/>
            <person name="Kamal M."/>
            <person name="Kamvysselis M."/>
            <person name="Mauceli E.W."/>
            <person name="Bielke C."/>
            <person name="Rudd S."/>
            <person name="Frishman D."/>
            <person name="Krystofova S."/>
            <person name="Rasmussen C."/>
            <person name="Metzenberg R.L."/>
            <person name="Perkins D.D."/>
            <person name="Kroken S."/>
            <person name="Cogoni C."/>
            <person name="Macino G."/>
            <person name="Catcheside D.E.A."/>
            <person name="Li W."/>
            <person name="Pratt R.J."/>
            <person name="Osmani S.A."/>
            <person name="DeSouza C.P.C."/>
            <person name="Glass N.L."/>
            <person name="Orbach M.J."/>
            <person name="Berglund J.A."/>
            <person name="Voelker R."/>
            <person name="Yarden O."/>
            <person name="Plamann M."/>
            <person name="Seiler S."/>
            <person name="Dunlap J.C."/>
            <person name="Radford A."/>
            <person name="Aramayo R."/>
            <person name="Natvig D.O."/>
            <person name="Alex L.A."/>
            <person name="Mannhaupt G."/>
            <person name="Ebbole D.J."/>
            <person name="Freitag M."/>
            <person name="Paulsen I."/>
            <person name="Sachs M.S."/>
            <person name="Lander E.S."/>
            <person name="Nusbaum C."/>
            <person name="Birren B.W."/>
        </authorList>
    </citation>
    <scope>NUCLEOTIDE SEQUENCE [LARGE SCALE GENOMIC DNA]</scope>
    <source>
        <strain>ATCC 24698 / 74-OR23-1A / CBS 708.71 / DSM 1257 / FGSC 987</strain>
    </source>
</reference>
<reference key="2">
    <citation type="journal article" date="1986" name="J. Biol. Chem.">
        <title>Nuclear genes for cytochrome c oxidase subunits of Neurospora crassa. Isolation and characterization of cDNA clones for subunits IV, V, VI, and possibly VII.</title>
        <authorList>
            <person name="Sachs M.S."/>
            <person name="David M."/>
            <person name="Werner S."/>
            <person name="RajBhandary U.L."/>
        </authorList>
    </citation>
    <scope>NUCLEOTIDE SEQUENCE [GENOMIC DNA] OF 16-45</scope>
</reference>
<reference key="3">
    <citation type="journal article" date="2007" name="Eukaryot. Cell">
        <title>Supramolecular organization of the respiratory chain in Neurospora crassa mitochondria.</title>
        <authorList>
            <person name="Marques I."/>
            <person name="Dencher N.A."/>
            <person name="Videira A."/>
            <person name="Krause F."/>
        </authorList>
    </citation>
    <scope>COMPOSITION OF THE CYTOCHROME C OXIDASE COMPLEX</scope>
    <scope>IDENTIFICATION BY MASS SPECTROMETRY</scope>
</reference>
<reference key="4">
    <citation type="journal article" date="2019" name="IUCrJ">
        <title>Cryo-EM structure of Neurospora crassa respiratory complex IV.</title>
        <authorList>
            <person name="Bausewein T."/>
            <person name="Nussberger S."/>
            <person name="Kuehlbrandt W."/>
        </authorList>
    </citation>
    <scope>STRUCTURE BY ELECTRON MICROSCOPY (5.5 ANGSTROMS)</scope>
    <scope>SUBUNIT</scope>
</reference>
<proteinExistence type="evidence at protein level"/>
<evidence type="ECO:0000250" key="1"/>
<evidence type="ECO:0000250" key="2">
    <source>
        <dbReference type="UniProtKB" id="P04037"/>
    </source>
</evidence>
<evidence type="ECO:0000269" key="3">
    <source>
    </source>
</evidence>
<evidence type="ECO:0000269" key="4">
    <source>
    </source>
</evidence>
<evidence type="ECO:0000303" key="5">
    <source>
    </source>
</evidence>
<evidence type="ECO:0000305" key="6"/>
<feature type="transit peptide" description="Mitochondrion" evidence="1">
    <location>
        <begin position="1"/>
        <end position="31"/>
    </location>
</feature>
<feature type="chain" id="PRO_0000006112" description="Cytochrome c oxidase subunit 4, mitochondrial">
    <location>
        <begin position="32"/>
        <end position="186"/>
    </location>
</feature>
<feature type="binding site" evidence="2">
    <location>
        <position position="118"/>
    </location>
    <ligand>
        <name>Zn(2+)</name>
        <dbReference type="ChEBI" id="CHEBI:29105"/>
    </ligand>
</feature>
<feature type="binding site" evidence="2">
    <location>
        <position position="126"/>
    </location>
    <ligand>
        <name>Zn(2+)</name>
        <dbReference type="ChEBI" id="CHEBI:29105"/>
    </ligand>
</feature>
<feature type="binding site" evidence="2">
    <location>
        <position position="142"/>
    </location>
    <ligand>
        <name>Zn(2+)</name>
        <dbReference type="ChEBI" id="CHEBI:29105"/>
    </ligand>
</feature>
<feature type="binding site" evidence="2">
    <location>
        <position position="145"/>
    </location>
    <ligand>
        <name>Zn(2+)</name>
        <dbReference type="ChEBI" id="CHEBI:29105"/>
    </ligand>
</feature>
<feature type="sequence conflict" description="In Ref. 2; AAA33574." evidence="6" ref="2">
    <original>A</original>
    <variation>R</variation>
    <location>
        <position position="16"/>
    </location>
</feature>
<feature type="sequence conflict" description="In Ref. 2; AAA33574." evidence="6" ref="2">
    <original>HIKRLS</original>
    <variation>PHQASL</variation>
    <location>
        <begin position="40"/>
        <end position="45"/>
    </location>
</feature>
<name>COX4_NEUCR</name>
<keyword id="KW-0472">Membrane</keyword>
<keyword id="KW-0479">Metal-binding</keyword>
<keyword id="KW-0496">Mitochondrion</keyword>
<keyword id="KW-0999">Mitochondrion inner membrane</keyword>
<keyword id="KW-1185">Reference proteome</keyword>
<keyword id="KW-0809">Transit peptide</keyword>
<keyword id="KW-0862">Zinc</keyword>
<sequence>MLLSRTAVAVARRATAAPALRRSIATTVVRCNAETKPVPHIKRLSEIKTKDDLFGPGAAPGTVPTDLEQATGLERLEILGKMEGVDVFDMKPLDASRRGTMENPISVRSAGDEQYAGCTGFPADSHNVIWLTMTRERPVERCPECGNVYKMDYVGPQDDHAHDHGHDHHGFEEPKTFADYVKPEYW</sequence>
<protein>
    <recommendedName>
        <fullName>Cytochrome c oxidase subunit 4, mitochondrial</fullName>
    </recommendedName>
    <alternativeName>
        <fullName>Cytochrome c oxidase polypeptide IV</fullName>
    </alternativeName>
    <alternativeName>
        <fullName evidence="5">Cytochrome c oxidase subunit Cox4</fullName>
    </alternativeName>
</protein>
<accession>P06809</accession>
<accession>Q7SBP9</accession>
<comment type="function">
    <text evidence="2">Component of the cytochrome c oxidase, the last enzyme in the mitochondrial electron transport chain which drives oxidative phosphorylation. The respiratory chain contains 3 multisubunit complexes succinate dehydrogenase (complex II, CII), ubiquinol-cytochrome c oxidoreductase (cytochrome b-c1 complex, complex III, CIII) and cytochrome c oxidase (complex IV, CIV), that cooperate to transfer electrons derived from NADH and succinate to molecular oxygen, creating an electrochemical gradient over the inner membrane that drives transmembrane transport and the ATP synthase. Cytochrome c oxidase is the component of the respiratory chain that catalyzes the reduction of oxygen to water. Electrons originating from reduced cytochrome c in the intermembrane space (IMS) are transferred via the dinuclear copper A center (CU(A)) of Cox2 and heme A of Cox1 to the active site in Cox1, a binuclear center (BNC) formed by heme A3 and copper B (CU(B)). The BNC reduces molecular oxygen to 2 water molecules using 4 electrons from cytochrome c in the IMS and 4 protons from the mitochondrial matrix.</text>
</comment>
<comment type="pathway">
    <text evidence="2">Energy metabolism; oxidative phosphorylation.</text>
</comment>
<comment type="subunit">
    <text evidence="3 4">Component of the cytochrome c oxidase (complex IV, CIV), a multisubunit enzyme composed of 11 subunits. The complex is composed of a catalytic core of 3 subunits Cox1, Cox2 and Cox3, encoded in the mitochondrial DNA, and 8 supernumerary subunits Cox4, Cox5a/Cox5, Cox6, Cox7, Cox8, Cox7a/Cox9, Cox6b/Cox12 and Cox6a/Cox13, which are encoded in the nuclear genome (PubMed:31316820). The complex exists as a monomer or a dimer and forms respiratory supercomplexes (SCs) in the inner mitochondrial membrane with NADH-ubiquinone oxidoreductase (complex I, CI) and ubiquinol-cytochrome c oxidoreductase (cytochrome b-c1 complex, complex III, CIII), resulting in various different assemblies (supercomplexes I(1)IV(1), I(1)III(3)IV(2), III(2)IV(1) and III(2)IV(2) as well as larger supercomplexes of compositions like I(1)III(2)IV(5-6)) (PubMed:17873079).</text>
</comment>
<comment type="subcellular location">
    <subcellularLocation>
        <location evidence="4">Mitochondrion inner membrane</location>
        <topology evidence="4">Peripheral membrane protein</topology>
        <orientation evidence="4">Matrix side</orientation>
    </subcellularLocation>
</comment>
<comment type="similarity">
    <text evidence="6">Belongs to the cytochrome c oxidase subunit 5B family.</text>
</comment>